<organism>
    <name type="scientific">Burkholderia pseudomallei (strain K96243)</name>
    <dbReference type="NCBI Taxonomy" id="272560"/>
    <lineage>
        <taxon>Bacteria</taxon>
        <taxon>Pseudomonadati</taxon>
        <taxon>Pseudomonadota</taxon>
        <taxon>Betaproteobacteria</taxon>
        <taxon>Burkholderiales</taxon>
        <taxon>Burkholderiaceae</taxon>
        <taxon>Burkholderia</taxon>
        <taxon>pseudomallei group</taxon>
    </lineage>
</organism>
<feature type="chain" id="PRO_1000009693" description="dCTP deaminase">
    <location>
        <begin position="1"/>
        <end position="189"/>
    </location>
</feature>
<feature type="active site" description="Proton donor/acceptor" evidence="1">
    <location>
        <position position="138"/>
    </location>
</feature>
<feature type="binding site" evidence="1">
    <location>
        <begin position="112"/>
        <end position="117"/>
    </location>
    <ligand>
        <name>dCTP</name>
        <dbReference type="ChEBI" id="CHEBI:61481"/>
    </ligand>
</feature>
<feature type="binding site" evidence="1">
    <location>
        <begin position="136"/>
        <end position="138"/>
    </location>
    <ligand>
        <name>dCTP</name>
        <dbReference type="ChEBI" id="CHEBI:61481"/>
    </ligand>
</feature>
<feature type="binding site" evidence="1">
    <location>
        <position position="157"/>
    </location>
    <ligand>
        <name>dCTP</name>
        <dbReference type="ChEBI" id="CHEBI:61481"/>
    </ligand>
</feature>
<feature type="binding site" evidence="1">
    <location>
        <position position="171"/>
    </location>
    <ligand>
        <name>dCTP</name>
        <dbReference type="ChEBI" id="CHEBI:61481"/>
    </ligand>
</feature>
<feature type="binding site" evidence="1">
    <location>
        <position position="181"/>
    </location>
    <ligand>
        <name>dCTP</name>
        <dbReference type="ChEBI" id="CHEBI:61481"/>
    </ligand>
</feature>
<accession>Q63W86</accession>
<proteinExistence type="inferred from homology"/>
<dbReference type="EC" id="3.5.4.13" evidence="1"/>
<dbReference type="EMBL" id="BX571965">
    <property type="protein sequence ID" value="CAH34998.1"/>
    <property type="molecule type" value="Genomic_DNA"/>
</dbReference>
<dbReference type="RefSeq" id="WP_004192666.1">
    <property type="nucleotide sequence ID" value="NZ_CP009538.1"/>
</dbReference>
<dbReference type="RefSeq" id="YP_107630.1">
    <property type="nucleotide sequence ID" value="NC_006350.1"/>
</dbReference>
<dbReference type="SMR" id="Q63W86"/>
<dbReference type="STRING" id="272560.BPSL1002"/>
<dbReference type="GeneID" id="93059502"/>
<dbReference type="KEGG" id="bps:BPSL1002"/>
<dbReference type="PATRIC" id="fig|272560.51.peg.567"/>
<dbReference type="eggNOG" id="COG0717">
    <property type="taxonomic scope" value="Bacteria"/>
</dbReference>
<dbReference type="UniPathway" id="UPA00610">
    <property type="reaction ID" value="UER00665"/>
</dbReference>
<dbReference type="Proteomes" id="UP000000605">
    <property type="component" value="Chromosome 1"/>
</dbReference>
<dbReference type="GO" id="GO:0008829">
    <property type="term" value="F:dCTP deaminase activity"/>
    <property type="evidence" value="ECO:0007669"/>
    <property type="project" value="UniProtKB-UniRule"/>
</dbReference>
<dbReference type="GO" id="GO:0000166">
    <property type="term" value="F:nucleotide binding"/>
    <property type="evidence" value="ECO:0007669"/>
    <property type="project" value="UniProtKB-KW"/>
</dbReference>
<dbReference type="GO" id="GO:0006226">
    <property type="term" value="P:dUMP biosynthetic process"/>
    <property type="evidence" value="ECO:0007669"/>
    <property type="project" value="UniProtKB-UniPathway"/>
</dbReference>
<dbReference type="GO" id="GO:0006229">
    <property type="term" value="P:dUTP biosynthetic process"/>
    <property type="evidence" value="ECO:0007669"/>
    <property type="project" value="UniProtKB-UniRule"/>
</dbReference>
<dbReference type="GO" id="GO:0015949">
    <property type="term" value="P:nucleobase-containing small molecule interconversion"/>
    <property type="evidence" value="ECO:0007669"/>
    <property type="project" value="TreeGrafter"/>
</dbReference>
<dbReference type="CDD" id="cd07557">
    <property type="entry name" value="trimeric_dUTPase"/>
    <property type="match status" value="1"/>
</dbReference>
<dbReference type="FunFam" id="2.70.40.10:FF:000001">
    <property type="entry name" value="dCTP deaminase"/>
    <property type="match status" value="1"/>
</dbReference>
<dbReference type="Gene3D" id="2.70.40.10">
    <property type="match status" value="1"/>
</dbReference>
<dbReference type="HAMAP" id="MF_00146">
    <property type="entry name" value="dCTP_deaminase"/>
    <property type="match status" value="1"/>
</dbReference>
<dbReference type="InterPro" id="IPR011962">
    <property type="entry name" value="dCTP_deaminase"/>
</dbReference>
<dbReference type="InterPro" id="IPR036157">
    <property type="entry name" value="dUTPase-like_sf"/>
</dbReference>
<dbReference type="InterPro" id="IPR033704">
    <property type="entry name" value="dUTPase_trimeric"/>
</dbReference>
<dbReference type="NCBIfam" id="TIGR02274">
    <property type="entry name" value="dCTP_deam"/>
    <property type="match status" value="1"/>
</dbReference>
<dbReference type="PANTHER" id="PTHR42680">
    <property type="entry name" value="DCTP DEAMINASE"/>
    <property type="match status" value="1"/>
</dbReference>
<dbReference type="PANTHER" id="PTHR42680:SF3">
    <property type="entry name" value="DCTP DEAMINASE"/>
    <property type="match status" value="1"/>
</dbReference>
<dbReference type="Pfam" id="PF22769">
    <property type="entry name" value="DCD"/>
    <property type="match status" value="1"/>
</dbReference>
<dbReference type="SUPFAM" id="SSF51283">
    <property type="entry name" value="dUTPase-like"/>
    <property type="match status" value="1"/>
</dbReference>
<sequence>MSIKSDKWIRRMAEEHKMIEPFVPDQVRAAEDGRKIVSYGTSSYGYDIRCADEFKIFTNINSTIVDPKNFDEGSFVDFKGDVCIIPPNSFALARTVEYFRIPRTVLTVCLGKSTYARCGIIVNVTPFEPEWEGYVTLEFSNTTPLPAKIYANEGVAQVLFFESDEVCDVSYADRGGKYQGQRGVTLPKT</sequence>
<comment type="function">
    <text evidence="1">Catalyzes the deamination of dCTP to dUTP.</text>
</comment>
<comment type="catalytic activity">
    <reaction evidence="1">
        <text>dCTP + H2O + H(+) = dUTP + NH4(+)</text>
        <dbReference type="Rhea" id="RHEA:22680"/>
        <dbReference type="ChEBI" id="CHEBI:15377"/>
        <dbReference type="ChEBI" id="CHEBI:15378"/>
        <dbReference type="ChEBI" id="CHEBI:28938"/>
        <dbReference type="ChEBI" id="CHEBI:61481"/>
        <dbReference type="ChEBI" id="CHEBI:61555"/>
        <dbReference type="EC" id="3.5.4.13"/>
    </reaction>
</comment>
<comment type="pathway">
    <text evidence="1">Pyrimidine metabolism; dUMP biosynthesis; dUMP from dCTP (dUTP route): step 1/2.</text>
</comment>
<comment type="subunit">
    <text evidence="1">Homotrimer.</text>
</comment>
<comment type="similarity">
    <text evidence="1">Belongs to the dCTP deaminase family.</text>
</comment>
<gene>
    <name evidence="1" type="primary">dcd</name>
    <name type="ordered locus">BPSL1002</name>
</gene>
<protein>
    <recommendedName>
        <fullName evidence="1">dCTP deaminase</fullName>
        <ecNumber evidence="1">3.5.4.13</ecNumber>
    </recommendedName>
    <alternativeName>
        <fullName evidence="1">Deoxycytidine triphosphate deaminase</fullName>
    </alternativeName>
</protein>
<reference key="1">
    <citation type="journal article" date="2004" name="Proc. Natl. Acad. Sci. U.S.A.">
        <title>Genomic plasticity of the causative agent of melioidosis, Burkholderia pseudomallei.</title>
        <authorList>
            <person name="Holden M.T.G."/>
            <person name="Titball R.W."/>
            <person name="Peacock S.J."/>
            <person name="Cerdeno-Tarraga A.-M."/>
            <person name="Atkins T."/>
            <person name="Crossman L.C."/>
            <person name="Pitt T."/>
            <person name="Churcher C."/>
            <person name="Mungall K.L."/>
            <person name="Bentley S.D."/>
            <person name="Sebaihia M."/>
            <person name="Thomson N.R."/>
            <person name="Bason N."/>
            <person name="Beacham I.R."/>
            <person name="Brooks K."/>
            <person name="Brown K.A."/>
            <person name="Brown N.F."/>
            <person name="Challis G.L."/>
            <person name="Cherevach I."/>
            <person name="Chillingworth T."/>
            <person name="Cronin A."/>
            <person name="Crossett B."/>
            <person name="Davis P."/>
            <person name="DeShazer D."/>
            <person name="Feltwell T."/>
            <person name="Fraser A."/>
            <person name="Hance Z."/>
            <person name="Hauser H."/>
            <person name="Holroyd S."/>
            <person name="Jagels K."/>
            <person name="Keith K.E."/>
            <person name="Maddison M."/>
            <person name="Moule S."/>
            <person name="Price C."/>
            <person name="Quail M.A."/>
            <person name="Rabbinowitsch E."/>
            <person name="Rutherford K."/>
            <person name="Sanders M."/>
            <person name="Simmonds M."/>
            <person name="Songsivilai S."/>
            <person name="Stevens K."/>
            <person name="Tumapa S."/>
            <person name="Vesaratchavest M."/>
            <person name="Whitehead S."/>
            <person name="Yeats C."/>
            <person name="Barrell B.G."/>
            <person name="Oyston P.C.F."/>
            <person name="Parkhill J."/>
        </authorList>
    </citation>
    <scope>NUCLEOTIDE SEQUENCE [LARGE SCALE GENOMIC DNA]</scope>
    <source>
        <strain>K96243</strain>
    </source>
</reference>
<evidence type="ECO:0000255" key="1">
    <source>
        <dbReference type="HAMAP-Rule" id="MF_00146"/>
    </source>
</evidence>
<name>DCD_BURPS</name>
<keyword id="KW-0378">Hydrolase</keyword>
<keyword id="KW-0546">Nucleotide metabolism</keyword>
<keyword id="KW-0547">Nucleotide-binding</keyword>
<keyword id="KW-1185">Reference proteome</keyword>